<proteinExistence type="predicted"/>
<accession>Q54D37</accession>
<gene>
    <name type="ORF">DDB_G0292498</name>
</gene>
<keyword id="KW-1185">Reference proteome</keyword>
<protein>
    <recommendedName>
        <fullName>Putative uncharacterized protein DDB_G0292498</fullName>
    </recommendedName>
</protein>
<name>Y4436_DICDI</name>
<sequence>MDSISVPLQFCLMRVQEAVPGKPHFSVERLLIRVTYSDERISHPIGNPEA</sequence>
<organism>
    <name type="scientific">Dictyostelium discoideum</name>
    <name type="common">Social amoeba</name>
    <dbReference type="NCBI Taxonomy" id="44689"/>
    <lineage>
        <taxon>Eukaryota</taxon>
        <taxon>Amoebozoa</taxon>
        <taxon>Evosea</taxon>
        <taxon>Eumycetozoa</taxon>
        <taxon>Dictyostelia</taxon>
        <taxon>Dictyosteliales</taxon>
        <taxon>Dictyosteliaceae</taxon>
        <taxon>Dictyostelium</taxon>
    </lineage>
</organism>
<reference key="1">
    <citation type="journal article" date="2005" name="Nature">
        <title>The genome of the social amoeba Dictyostelium discoideum.</title>
        <authorList>
            <person name="Eichinger L."/>
            <person name="Pachebat J.A."/>
            <person name="Gloeckner G."/>
            <person name="Rajandream M.A."/>
            <person name="Sucgang R."/>
            <person name="Berriman M."/>
            <person name="Song J."/>
            <person name="Olsen R."/>
            <person name="Szafranski K."/>
            <person name="Xu Q."/>
            <person name="Tunggal B."/>
            <person name="Kummerfeld S."/>
            <person name="Madera M."/>
            <person name="Konfortov B.A."/>
            <person name="Rivero F."/>
            <person name="Bankier A.T."/>
            <person name="Lehmann R."/>
            <person name="Hamlin N."/>
            <person name="Davies R."/>
            <person name="Gaudet P."/>
            <person name="Fey P."/>
            <person name="Pilcher K."/>
            <person name="Chen G."/>
            <person name="Saunders D."/>
            <person name="Sodergren E.J."/>
            <person name="Davis P."/>
            <person name="Kerhornou A."/>
            <person name="Nie X."/>
            <person name="Hall N."/>
            <person name="Anjard C."/>
            <person name="Hemphill L."/>
            <person name="Bason N."/>
            <person name="Farbrother P."/>
            <person name="Desany B."/>
            <person name="Just E."/>
            <person name="Morio T."/>
            <person name="Rost R."/>
            <person name="Churcher C.M."/>
            <person name="Cooper J."/>
            <person name="Haydock S."/>
            <person name="van Driessche N."/>
            <person name="Cronin A."/>
            <person name="Goodhead I."/>
            <person name="Muzny D.M."/>
            <person name="Mourier T."/>
            <person name="Pain A."/>
            <person name="Lu M."/>
            <person name="Harper D."/>
            <person name="Lindsay R."/>
            <person name="Hauser H."/>
            <person name="James K.D."/>
            <person name="Quiles M."/>
            <person name="Madan Babu M."/>
            <person name="Saito T."/>
            <person name="Buchrieser C."/>
            <person name="Wardroper A."/>
            <person name="Felder M."/>
            <person name="Thangavelu M."/>
            <person name="Johnson D."/>
            <person name="Knights A."/>
            <person name="Loulseged H."/>
            <person name="Mungall K.L."/>
            <person name="Oliver K."/>
            <person name="Price C."/>
            <person name="Quail M.A."/>
            <person name="Urushihara H."/>
            <person name="Hernandez J."/>
            <person name="Rabbinowitsch E."/>
            <person name="Steffen D."/>
            <person name="Sanders M."/>
            <person name="Ma J."/>
            <person name="Kohara Y."/>
            <person name="Sharp S."/>
            <person name="Simmonds M.N."/>
            <person name="Spiegler S."/>
            <person name="Tivey A."/>
            <person name="Sugano S."/>
            <person name="White B."/>
            <person name="Walker D."/>
            <person name="Woodward J.R."/>
            <person name="Winckler T."/>
            <person name="Tanaka Y."/>
            <person name="Shaulsky G."/>
            <person name="Schleicher M."/>
            <person name="Weinstock G.M."/>
            <person name="Rosenthal A."/>
            <person name="Cox E.C."/>
            <person name="Chisholm R.L."/>
            <person name="Gibbs R.A."/>
            <person name="Loomis W.F."/>
            <person name="Platzer M."/>
            <person name="Kay R.R."/>
            <person name="Williams J.G."/>
            <person name="Dear P.H."/>
            <person name="Noegel A.A."/>
            <person name="Barrell B.G."/>
            <person name="Kuspa A."/>
        </authorList>
    </citation>
    <scope>NUCLEOTIDE SEQUENCE [LARGE SCALE GENOMIC DNA]</scope>
    <source>
        <strain>AX4</strain>
    </source>
</reference>
<dbReference type="EMBL" id="AAFI02000190">
    <property type="protein sequence ID" value="EAL61228.1"/>
    <property type="molecule type" value="Genomic_DNA"/>
</dbReference>
<dbReference type="RefSeq" id="XP_629659.1">
    <property type="nucleotide sequence ID" value="XM_629657.1"/>
</dbReference>
<dbReference type="FunCoup" id="Q54D37">
    <property type="interactions" value="877"/>
</dbReference>
<dbReference type="PaxDb" id="44689-DDB0184436"/>
<dbReference type="EnsemblProtists" id="EAL61228">
    <property type="protein sequence ID" value="EAL61228"/>
    <property type="gene ID" value="DDB_G0292498"/>
</dbReference>
<dbReference type="GeneID" id="8628723"/>
<dbReference type="KEGG" id="ddi:DDB_G0292498"/>
<dbReference type="dictyBase" id="DDB_G0292498"/>
<dbReference type="VEuPathDB" id="AmoebaDB:DDB_G0292498"/>
<dbReference type="eggNOG" id="ENOG502RIJI">
    <property type="taxonomic scope" value="Eukaryota"/>
</dbReference>
<dbReference type="HOGENOM" id="CLU_3128243_0_0_1"/>
<dbReference type="InParanoid" id="Q54D37"/>
<dbReference type="OMA" id="KPHFSVE"/>
<dbReference type="PRO" id="PR:Q54D37"/>
<dbReference type="Proteomes" id="UP000002195">
    <property type="component" value="Chromosome 6"/>
</dbReference>
<feature type="chain" id="PRO_0000344413" description="Putative uncharacterized protein DDB_G0292498">
    <location>
        <begin position="1"/>
        <end position="50"/>
    </location>
</feature>